<dbReference type="EMBL" id="AY279524">
    <property type="protein sequence ID" value="AAQ88216.1"/>
    <property type="molecule type" value="Genomic_DNA"/>
</dbReference>
<dbReference type="EMBL" id="AY900117">
    <property type="protein sequence ID" value="AAX54938.1"/>
    <property type="molecule type" value="Genomic_DNA"/>
</dbReference>
<dbReference type="EMBL" id="CABZ01099332">
    <property type="status" value="NOT_ANNOTATED_CDS"/>
    <property type="molecule type" value="Genomic_DNA"/>
</dbReference>
<dbReference type="EMBL" id="BC163621">
    <property type="protein sequence ID" value="AAI63621.1"/>
    <property type="molecule type" value="mRNA"/>
</dbReference>
<dbReference type="EMBL" id="AM778163">
    <property type="protein sequence ID" value="CAO85673.1"/>
    <property type="molecule type" value="mRNA"/>
</dbReference>
<dbReference type="RefSeq" id="NP_001124140.1">
    <property type="nucleotide sequence ID" value="NM_001130668.1"/>
</dbReference>
<dbReference type="SMR" id="A0A0R4IM31"/>
<dbReference type="FunCoup" id="A0A0R4IM31">
    <property type="interactions" value="1258"/>
</dbReference>
<dbReference type="STRING" id="7955.ENSDARP00000135478"/>
<dbReference type="BindingDB" id="A0A0R4IM31"/>
<dbReference type="GlyCosmos" id="A0A0R4IM31">
    <property type="glycosylation" value="2 sites, No reported glycans"/>
</dbReference>
<dbReference type="Ensembl" id="ENSDART00000171954">
    <property type="protein sequence ID" value="ENSDARP00000135478"/>
    <property type="gene ID" value="ENSDARG00000098601"/>
</dbReference>
<dbReference type="GeneID" id="553133"/>
<dbReference type="KEGG" id="dre:553133"/>
<dbReference type="AGR" id="ZFIN:ZDB-GENE-050510-2"/>
<dbReference type="CTD" id="553133"/>
<dbReference type="ZFIN" id="ZDB-GENE-050510-2">
    <property type="gene designation" value="ora1"/>
</dbReference>
<dbReference type="InParanoid" id="A0A0R4IM31"/>
<dbReference type="OMA" id="RCVPQTM"/>
<dbReference type="OrthoDB" id="9606139at2759"/>
<dbReference type="PRO" id="PR:A0A0R4IM31"/>
<dbReference type="Proteomes" id="UP000000437">
    <property type="component" value="Chromosome 22"/>
</dbReference>
<dbReference type="Bgee" id="ENSDARG00000098601">
    <property type="expression patterns" value="Expressed in olfactory rosette and 3 other cell types or tissues"/>
</dbReference>
<dbReference type="GO" id="GO:0005886">
    <property type="term" value="C:plasma membrane"/>
    <property type="evidence" value="ECO:0000314"/>
    <property type="project" value="ZFIN"/>
</dbReference>
<dbReference type="GO" id="GO:0072545">
    <property type="term" value="F:L-tyrosine binding"/>
    <property type="evidence" value="ECO:0000314"/>
    <property type="project" value="ZFIN"/>
</dbReference>
<dbReference type="GO" id="GO:0033293">
    <property type="term" value="F:monocarboxylic acid binding"/>
    <property type="evidence" value="ECO:0000314"/>
    <property type="project" value="ZFIN"/>
</dbReference>
<dbReference type="GO" id="GO:0005550">
    <property type="term" value="F:pheromone binding"/>
    <property type="evidence" value="ECO:0000314"/>
    <property type="project" value="ZFIN"/>
</dbReference>
<dbReference type="GO" id="GO:0016503">
    <property type="term" value="F:pheromone receptor activity"/>
    <property type="evidence" value="ECO:0000250"/>
    <property type="project" value="ZFIN"/>
</dbReference>
<dbReference type="GO" id="GO:0019236">
    <property type="term" value="P:response to pheromone"/>
    <property type="evidence" value="ECO:0007669"/>
    <property type="project" value="UniProtKB-KW"/>
</dbReference>
<dbReference type="GO" id="GO:0007608">
    <property type="term" value="P:sensory perception of smell"/>
    <property type="evidence" value="ECO:0007669"/>
    <property type="project" value="UniProtKB-KW"/>
</dbReference>
<dbReference type="FunFam" id="1.20.1070.10:FF:000300">
    <property type="entry name" value="Vomeronasal type-1 receptor"/>
    <property type="match status" value="1"/>
</dbReference>
<dbReference type="Gene3D" id="1.20.1070.10">
    <property type="entry name" value="Rhodopsin 7-helix transmembrane proteins"/>
    <property type="match status" value="1"/>
</dbReference>
<dbReference type="InterPro" id="IPR017452">
    <property type="entry name" value="GPCR_Rhodpsn_7TM"/>
</dbReference>
<dbReference type="InterPro" id="IPR004072">
    <property type="entry name" value="Vmron_rcpt_1"/>
</dbReference>
<dbReference type="PANTHER" id="PTHR24062">
    <property type="entry name" value="VOMERONASAL TYPE-1 RECEPTOR"/>
    <property type="match status" value="1"/>
</dbReference>
<dbReference type="Pfam" id="PF03402">
    <property type="entry name" value="V1R"/>
    <property type="match status" value="1"/>
</dbReference>
<dbReference type="SUPFAM" id="SSF81321">
    <property type="entry name" value="Family A G protein-coupled receptor-like"/>
    <property type="match status" value="1"/>
</dbReference>
<dbReference type="PROSITE" id="PS50262">
    <property type="entry name" value="G_PROTEIN_RECEP_F1_2"/>
    <property type="match status" value="1"/>
</dbReference>
<proteinExistence type="evidence at transcript level"/>
<accession>A0A0R4IM31</accession>
<accession>A8E0W7</accession>
<accession>B3DJV6</accession>
<accession>Q58QC6</accession>
<accession>Q597G5</accession>
<name>ORA1_DANRE</name>
<evidence type="ECO:0000255" key="1"/>
<evidence type="ECO:0000255" key="2">
    <source>
        <dbReference type="PROSITE-ProRule" id="PRU00498"/>
    </source>
</evidence>
<evidence type="ECO:0000255" key="3">
    <source>
        <dbReference type="PROSITE-ProRule" id="PRU00521"/>
    </source>
</evidence>
<evidence type="ECO:0000255" key="4">
    <source>
        <dbReference type="RuleBase" id="RU364061"/>
    </source>
</evidence>
<evidence type="ECO:0000269" key="5">
    <source>
    </source>
</evidence>
<evidence type="ECO:0000269" key="6">
    <source>
    </source>
</evidence>
<evidence type="ECO:0000269" key="7">
    <source>
    </source>
</evidence>
<evidence type="ECO:0000303" key="8">
    <source>
    </source>
</evidence>
<evidence type="ECO:0000305" key="9"/>
<evidence type="ECO:0000312" key="10">
    <source>
        <dbReference type="EMBL" id="AAI63621.1"/>
    </source>
</evidence>
<evidence type="ECO:0000312" key="11">
    <source>
        <dbReference type="EMBL" id="AAQ88216.1"/>
    </source>
</evidence>
<evidence type="ECO:0000312" key="12">
    <source>
        <dbReference type="EMBL" id="CAO85673.1"/>
    </source>
</evidence>
<evidence type="ECO:0000312" key="13">
    <source>
        <dbReference type="Proteomes" id="UP000000437"/>
    </source>
</evidence>
<keyword id="KW-1003">Cell membrane</keyword>
<keyword id="KW-1015">Disulfide bond</keyword>
<keyword id="KW-0297">G-protein coupled receptor</keyword>
<keyword id="KW-0325">Glycoprotein</keyword>
<keyword id="KW-0472">Membrane</keyword>
<keyword id="KW-0552">Olfaction</keyword>
<keyword id="KW-0589">Pheromone response</keyword>
<keyword id="KW-0590">Pheromone-binding</keyword>
<keyword id="KW-0675">Receptor</keyword>
<keyword id="KW-1185">Reference proteome</keyword>
<keyword id="KW-0716">Sensory transduction</keyword>
<keyword id="KW-0807">Transducer</keyword>
<keyword id="KW-0812">Transmembrane</keyword>
<keyword id="KW-1133">Transmembrane helix</keyword>
<feature type="chain" id="PRO_0000444571" description="Olfactory receptor class A-like protein 1">
    <location>
        <begin position="1"/>
        <end position="316"/>
    </location>
</feature>
<feature type="topological domain" description="Extracellular" evidence="9">
    <location>
        <begin position="1"/>
        <end position="8"/>
    </location>
</feature>
<feature type="transmembrane region" description="Helical; Name=1" evidence="1">
    <location>
        <begin position="9"/>
        <end position="29"/>
    </location>
</feature>
<feature type="topological domain" description="Cytoplasmic" evidence="9">
    <location>
        <begin position="30"/>
        <end position="39"/>
    </location>
</feature>
<feature type="transmembrane region" description="Helical; Name=2" evidence="1">
    <location>
        <begin position="40"/>
        <end position="60"/>
    </location>
</feature>
<feature type="topological domain" description="Extracellular" evidence="9">
    <location>
        <begin position="61"/>
        <end position="97"/>
    </location>
</feature>
<feature type="transmembrane region" description="Helical; Name=3" evidence="1">
    <location>
        <begin position="98"/>
        <end position="118"/>
    </location>
</feature>
<feature type="topological domain" description="Cytoplasmic" evidence="9">
    <location>
        <begin position="119"/>
        <end position="132"/>
    </location>
</feature>
<feature type="transmembrane region" description="Helical; Name=4" evidence="1">
    <location>
        <begin position="133"/>
        <end position="153"/>
    </location>
</feature>
<feature type="topological domain" description="Extracellular" evidence="9">
    <location>
        <begin position="154"/>
        <end position="187"/>
    </location>
</feature>
<feature type="transmembrane region" description="Helical; Name=5" evidence="1">
    <location>
        <begin position="188"/>
        <end position="208"/>
    </location>
</feature>
<feature type="topological domain" description="Cytoplasmic" evidence="9">
    <location>
        <begin position="209"/>
        <end position="233"/>
    </location>
</feature>
<feature type="transmembrane region" description="Helical; Name=6" evidence="1">
    <location>
        <begin position="234"/>
        <end position="254"/>
    </location>
</feature>
<feature type="topological domain" description="Extracellular" evidence="9">
    <location>
        <begin position="255"/>
        <end position="264"/>
    </location>
</feature>
<feature type="transmembrane region" description="Helical; Name=7" evidence="1">
    <location>
        <begin position="265"/>
        <end position="285"/>
    </location>
</feature>
<feature type="topological domain" description="Cytoplasmic" evidence="9">
    <location>
        <begin position="286"/>
        <end position="316"/>
    </location>
</feature>
<feature type="glycosylation site" description="N-linked (GlcNAc...) asparagine" evidence="2">
    <location>
        <position position="156"/>
    </location>
</feature>
<feature type="glycosylation site" description="N-linked (GlcNAc...) asparagine" evidence="2">
    <location>
        <position position="176"/>
    </location>
</feature>
<feature type="disulfide bond" evidence="3">
    <location>
        <begin position="81"/>
        <end position="169"/>
    </location>
</feature>
<feature type="sequence conflict" description="In Ref. 3; AAI63621." evidence="9" ref="3">
    <original>V</original>
    <variation>L</variation>
    <location>
        <position position="121"/>
    </location>
</feature>
<feature type="sequence conflict" description="In Ref. 1; AAX54938." evidence="9" ref="1">
    <original>AD</original>
    <variation>GH</variation>
    <location>
        <begin position="266"/>
        <end position="267"/>
    </location>
</feature>
<feature type="sequence conflict" description="In Ref. 1; AAQ88216." evidence="9" ref="1">
    <original>D</original>
    <variation>H</variation>
    <location>
        <position position="267"/>
    </location>
</feature>
<feature type="sequence conflict" description="In Ref. 1; AAX54938." evidence="9" ref="1">
    <original>S</original>
    <variation>I</variation>
    <location>
        <position position="280"/>
    </location>
</feature>
<comment type="function">
    <text evidence="7">Probable pheromone receptor. Shows high specificity for 4-hydroxyphenylacetic acid. Activation of the receptor stimulates intracellular calcium release.</text>
</comment>
<comment type="subcellular location">
    <subcellularLocation>
        <location evidence="4 7">Cell membrane</location>
        <topology evidence="4">Multi-pass membrane protein</topology>
    </subcellularLocation>
</comment>
<comment type="tissue specificity">
    <text evidence="5 6">Highly expressed in the olfactory rosette where it localizes to a subset of olfactory sensory neurons, mainly in the apical region of the neuroepithelium. Not detected in other tissues tested.</text>
</comment>
<comment type="similarity">
    <text evidence="4">Belongs to the G-protein coupled receptor 1 family.</text>
</comment>
<organism evidence="13">
    <name type="scientific">Danio rerio</name>
    <name type="common">Zebrafish</name>
    <name type="synonym">Brachydanio rerio</name>
    <dbReference type="NCBI Taxonomy" id="7955"/>
    <lineage>
        <taxon>Eukaryota</taxon>
        <taxon>Metazoa</taxon>
        <taxon>Chordata</taxon>
        <taxon>Craniata</taxon>
        <taxon>Vertebrata</taxon>
        <taxon>Euteleostomi</taxon>
        <taxon>Actinopterygii</taxon>
        <taxon>Neopterygii</taxon>
        <taxon>Teleostei</taxon>
        <taxon>Ostariophysi</taxon>
        <taxon>Cypriniformes</taxon>
        <taxon>Danionidae</taxon>
        <taxon>Danioninae</taxon>
        <taxon>Danio</taxon>
    </lineage>
</organism>
<protein>
    <recommendedName>
        <fullName evidence="9">Olfactory receptor class A-like protein 1</fullName>
    </recommendedName>
    <alternativeName>
        <fullName evidence="8">Vomeronasal type-1 receptor-like protein</fullName>
    </alternativeName>
</protein>
<sequence>MDLCVTIKGVSFLLQAGLGILANALVLLAYAHIRLAEARLQPVDAILCHLALVDLLLLLTRGVPQTMTVFGMRNLLDDTGCKVVIYTYRIARALSVCITCMLSVFQAVTVAPAAGPLLSGVKARLPQLLAPTFAALWFINMAVCIAAPFFSVAPRNGTVPPFTLNLGFCHVDFHDNLSYVLNGVAVSVRDFAFVGAMLASSGFILLLLHRHRRQVRAVRRSQGSTMETRAARTVLMLVILYSVFFGIDNVIWIYMLTVAQVPPVVADMRVFFSSCYASLSPFLIISSNRKLKARMVCATSEQERQAEDGKNSSGKN</sequence>
<gene>
    <name evidence="9" type="primary">ora1</name>
    <name evidence="8" type="synonym">Vlr2</name>
</gene>
<reference evidence="11" key="1">
    <citation type="journal article" date="2005" name="Proc. Natl. Acad. Sci. U.S.A.">
        <title>Olfactory expression of a single and highly variable V1r pheromone receptor-like gene in fish species.</title>
        <authorList>
            <person name="Pfister P."/>
            <person name="Rodriguez I."/>
        </authorList>
    </citation>
    <scope>NUCLEOTIDE SEQUENCE [GENOMIC DNA]</scope>
    <scope>TISSUE SPECIFICITY</scope>
</reference>
<reference evidence="13" key="2">
    <citation type="journal article" date="2013" name="Nature">
        <title>The zebrafish reference genome sequence and its relationship to the human genome.</title>
        <authorList>
            <person name="Howe K."/>
            <person name="Clark M.D."/>
            <person name="Torroja C.F."/>
            <person name="Torrance J."/>
            <person name="Berthelot C."/>
            <person name="Muffato M."/>
            <person name="Collins J.E."/>
            <person name="Humphray S."/>
            <person name="McLaren K."/>
            <person name="Matthews L."/>
            <person name="McLaren S."/>
            <person name="Sealy I."/>
            <person name="Caccamo M."/>
            <person name="Churcher C."/>
            <person name="Scott C."/>
            <person name="Barrett J.C."/>
            <person name="Koch R."/>
            <person name="Rauch G.J."/>
            <person name="White S."/>
            <person name="Chow W."/>
            <person name="Kilian B."/>
            <person name="Quintais L.T."/>
            <person name="Guerra-Assuncao J.A."/>
            <person name="Zhou Y."/>
            <person name="Gu Y."/>
            <person name="Yen J."/>
            <person name="Vogel J.H."/>
            <person name="Eyre T."/>
            <person name="Redmond S."/>
            <person name="Banerjee R."/>
            <person name="Chi J."/>
            <person name="Fu B."/>
            <person name="Langley E."/>
            <person name="Maguire S.F."/>
            <person name="Laird G.K."/>
            <person name="Lloyd D."/>
            <person name="Kenyon E."/>
            <person name="Donaldson S."/>
            <person name="Sehra H."/>
            <person name="Almeida-King J."/>
            <person name="Loveland J."/>
            <person name="Trevanion S."/>
            <person name="Jones M."/>
            <person name="Quail M."/>
            <person name="Willey D."/>
            <person name="Hunt A."/>
            <person name="Burton J."/>
            <person name="Sims S."/>
            <person name="McLay K."/>
            <person name="Plumb B."/>
            <person name="Davis J."/>
            <person name="Clee C."/>
            <person name="Oliver K."/>
            <person name="Clark R."/>
            <person name="Riddle C."/>
            <person name="Elliot D."/>
            <person name="Threadgold G."/>
            <person name="Harden G."/>
            <person name="Ware D."/>
            <person name="Begum S."/>
            <person name="Mortimore B."/>
            <person name="Kerry G."/>
            <person name="Heath P."/>
            <person name="Phillimore B."/>
            <person name="Tracey A."/>
            <person name="Corby N."/>
            <person name="Dunn M."/>
            <person name="Johnson C."/>
            <person name="Wood J."/>
            <person name="Clark S."/>
            <person name="Pelan S."/>
            <person name="Griffiths G."/>
            <person name="Smith M."/>
            <person name="Glithero R."/>
            <person name="Howden P."/>
            <person name="Barker N."/>
            <person name="Lloyd C."/>
            <person name="Stevens C."/>
            <person name="Harley J."/>
            <person name="Holt K."/>
            <person name="Panagiotidis G."/>
            <person name="Lovell J."/>
            <person name="Beasley H."/>
            <person name="Henderson C."/>
            <person name="Gordon D."/>
            <person name="Auger K."/>
            <person name="Wright D."/>
            <person name="Collins J."/>
            <person name="Raisen C."/>
            <person name="Dyer L."/>
            <person name="Leung K."/>
            <person name="Robertson L."/>
            <person name="Ambridge K."/>
            <person name="Leongamornlert D."/>
            <person name="McGuire S."/>
            <person name="Gilderthorp R."/>
            <person name="Griffiths C."/>
            <person name="Manthravadi D."/>
            <person name="Nichol S."/>
            <person name="Barker G."/>
            <person name="Whitehead S."/>
            <person name="Kay M."/>
            <person name="Brown J."/>
            <person name="Murnane C."/>
            <person name="Gray E."/>
            <person name="Humphries M."/>
            <person name="Sycamore N."/>
            <person name="Barker D."/>
            <person name="Saunders D."/>
            <person name="Wallis J."/>
            <person name="Babbage A."/>
            <person name="Hammond S."/>
            <person name="Mashreghi-Mohammadi M."/>
            <person name="Barr L."/>
            <person name="Martin S."/>
            <person name="Wray P."/>
            <person name="Ellington A."/>
            <person name="Matthews N."/>
            <person name="Ellwood M."/>
            <person name="Woodmansey R."/>
            <person name="Clark G."/>
            <person name="Cooper J."/>
            <person name="Tromans A."/>
            <person name="Grafham D."/>
            <person name="Skuce C."/>
            <person name="Pandian R."/>
            <person name="Andrews R."/>
            <person name="Harrison E."/>
            <person name="Kimberley A."/>
            <person name="Garnett J."/>
            <person name="Fosker N."/>
            <person name="Hall R."/>
            <person name="Garner P."/>
            <person name="Kelly D."/>
            <person name="Bird C."/>
            <person name="Palmer S."/>
            <person name="Gehring I."/>
            <person name="Berger A."/>
            <person name="Dooley C.M."/>
            <person name="Ersan-Urun Z."/>
            <person name="Eser C."/>
            <person name="Geiger H."/>
            <person name="Geisler M."/>
            <person name="Karotki L."/>
            <person name="Kirn A."/>
            <person name="Konantz J."/>
            <person name="Konantz M."/>
            <person name="Oberlander M."/>
            <person name="Rudolph-Geiger S."/>
            <person name="Teucke M."/>
            <person name="Lanz C."/>
            <person name="Raddatz G."/>
            <person name="Osoegawa K."/>
            <person name="Zhu B."/>
            <person name="Rapp A."/>
            <person name="Widaa S."/>
            <person name="Langford C."/>
            <person name="Yang F."/>
            <person name="Schuster S.C."/>
            <person name="Carter N.P."/>
            <person name="Harrow J."/>
            <person name="Ning Z."/>
            <person name="Herrero J."/>
            <person name="Searle S.M."/>
            <person name="Enright A."/>
            <person name="Geisler R."/>
            <person name="Plasterk R.H."/>
            <person name="Lee C."/>
            <person name="Westerfield M."/>
            <person name="de Jong P.J."/>
            <person name="Zon L.I."/>
            <person name="Postlethwait J.H."/>
            <person name="Nusslein-Volhard C."/>
            <person name="Hubbard T.J."/>
            <person name="Roest Crollius H."/>
            <person name="Rogers J."/>
            <person name="Stemple D.L."/>
        </authorList>
    </citation>
    <scope>NUCLEOTIDE SEQUENCE [LARGE SCALE GENOMIC DNA]</scope>
    <source>
        <strain>Tuebingen</strain>
    </source>
</reference>
<reference evidence="10" key="3">
    <citation type="submission" date="2008-04" db="EMBL/GenBank/DDBJ databases">
        <authorList>
            <consortium name="NIH - Zebrafish Gene Collection (ZGC) project"/>
        </authorList>
    </citation>
    <scope>NUCLEOTIDE SEQUENCE [LARGE SCALE MRNA]</scope>
</reference>
<reference evidence="12" key="4">
    <citation type="journal article" date="2007" name="Genome Res.">
        <title>A novel olfactory receptor gene family in teleost fish.</title>
        <authorList>
            <person name="Saraiva L.R."/>
            <person name="Korsching S.I."/>
        </authorList>
    </citation>
    <scope>NUCLEOTIDE SEQUENCE [MRNA] OF 1-174</scope>
    <scope>TISSUE SPECIFICITY</scope>
    <source>
        <tissue evidence="12">Olfactory rosette</tissue>
    </source>
</reference>
<reference evidence="9" key="5">
    <citation type="journal article" date="2014" name="J. Biol. Chem.">
        <title>ORA1, a zebrafish olfactory receptor ancestral to all mammalian V1R genes, recognizes 4-hydroxyphenylacetic acid, a putative reproductive pheromone.</title>
        <authorList>
            <person name="Behrens M."/>
            <person name="Frank O."/>
            <person name="Rawel H."/>
            <person name="Ahuja G."/>
            <person name="Potting C."/>
            <person name="Hofmann T."/>
            <person name="Meyerhof W."/>
            <person name="Korsching S."/>
        </authorList>
    </citation>
    <scope>FUNCTION</scope>
    <scope>SUBCELLULAR LOCATION</scope>
</reference>